<comment type="similarity">
    <text evidence="1">Belongs to the bacterial ribosomal protein bL32 family.</text>
</comment>
<protein>
    <recommendedName>
        <fullName evidence="1">Large ribosomal subunit protein bL32</fullName>
    </recommendedName>
    <alternativeName>
        <fullName evidence="3">50S ribosomal protein L32</fullName>
    </alternativeName>
</protein>
<sequence length="54" mass="6229">MAVQKNKPTRSKRGMRRSHDSLTAPHLSIDKFSGETHIRHHITNNGYYKGKKVI</sequence>
<dbReference type="EMBL" id="CP001161">
    <property type="protein sequence ID" value="ACL30706.1"/>
    <property type="molecule type" value="Genomic_DNA"/>
</dbReference>
<dbReference type="RefSeq" id="WP_009874304.1">
    <property type="nucleotide sequence ID" value="NC_011833.1"/>
</dbReference>
<dbReference type="SMR" id="B8D9D5"/>
<dbReference type="KEGG" id="bap:BUAP5A_343"/>
<dbReference type="HOGENOM" id="CLU_129084_2_1_6"/>
<dbReference type="OrthoDB" id="9801927at2"/>
<dbReference type="Proteomes" id="UP000006904">
    <property type="component" value="Chromosome"/>
</dbReference>
<dbReference type="GO" id="GO:0015934">
    <property type="term" value="C:large ribosomal subunit"/>
    <property type="evidence" value="ECO:0007669"/>
    <property type="project" value="InterPro"/>
</dbReference>
<dbReference type="GO" id="GO:0003735">
    <property type="term" value="F:structural constituent of ribosome"/>
    <property type="evidence" value="ECO:0007669"/>
    <property type="project" value="InterPro"/>
</dbReference>
<dbReference type="GO" id="GO:0006412">
    <property type="term" value="P:translation"/>
    <property type="evidence" value="ECO:0007669"/>
    <property type="project" value="UniProtKB-UniRule"/>
</dbReference>
<dbReference type="HAMAP" id="MF_00340">
    <property type="entry name" value="Ribosomal_bL32"/>
    <property type="match status" value="1"/>
</dbReference>
<dbReference type="InterPro" id="IPR002677">
    <property type="entry name" value="Ribosomal_bL32"/>
</dbReference>
<dbReference type="InterPro" id="IPR044957">
    <property type="entry name" value="Ribosomal_bL32_bact"/>
</dbReference>
<dbReference type="InterPro" id="IPR011332">
    <property type="entry name" value="Ribosomal_zn-bd"/>
</dbReference>
<dbReference type="NCBIfam" id="TIGR01031">
    <property type="entry name" value="rpmF_bact"/>
    <property type="match status" value="1"/>
</dbReference>
<dbReference type="PANTHER" id="PTHR35534">
    <property type="entry name" value="50S RIBOSOMAL PROTEIN L32"/>
    <property type="match status" value="1"/>
</dbReference>
<dbReference type="PANTHER" id="PTHR35534:SF1">
    <property type="entry name" value="LARGE RIBOSOMAL SUBUNIT PROTEIN BL32"/>
    <property type="match status" value="1"/>
</dbReference>
<dbReference type="Pfam" id="PF01783">
    <property type="entry name" value="Ribosomal_L32p"/>
    <property type="match status" value="1"/>
</dbReference>
<dbReference type="SUPFAM" id="SSF57829">
    <property type="entry name" value="Zn-binding ribosomal proteins"/>
    <property type="match status" value="1"/>
</dbReference>
<evidence type="ECO:0000255" key="1">
    <source>
        <dbReference type="HAMAP-Rule" id="MF_00340"/>
    </source>
</evidence>
<evidence type="ECO:0000256" key="2">
    <source>
        <dbReference type="SAM" id="MobiDB-lite"/>
    </source>
</evidence>
<evidence type="ECO:0000305" key="3"/>
<proteinExistence type="inferred from homology"/>
<reference key="1">
    <citation type="journal article" date="2009" name="Science">
        <title>The dynamics and time scale of ongoing genomic erosion in symbiotic bacteria.</title>
        <authorList>
            <person name="Moran N.A."/>
            <person name="McLaughlin H.J."/>
            <person name="Sorek R."/>
        </authorList>
    </citation>
    <scope>NUCLEOTIDE SEQUENCE [LARGE SCALE GENOMIC DNA]</scope>
    <source>
        <strain>5A</strain>
    </source>
</reference>
<keyword id="KW-0687">Ribonucleoprotein</keyword>
<keyword id="KW-0689">Ribosomal protein</keyword>
<accession>B8D9D5</accession>
<organism>
    <name type="scientific">Buchnera aphidicola subsp. Acyrthosiphon pisum (strain 5A)</name>
    <dbReference type="NCBI Taxonomy" id="563178"/>
    <lineage>
        <taxon>Bacteria</taxon>
        <taxon>Pseudomonadati</taxon>
        <taxon>Pseudomonadota</taxon>
        <taxon>Gammaproteobacteria</taxon>
        <taxon>Enterobacterales</taxon>
        <taxon>Erwiniaceae</taxon>
        <taxon>Buchnera</taxon>
    </lineage>
</organism>
<feature type="chain" id="PRO_1000195964" description="Large ribosomal subunit protein bL32">
    <location>
        <begin position="1"/>
        <end position="54"/>
    </location>
</feature>
<feature type="region of interest" description="Disordered" evidence="2">
    <location>
        <begin position="1"/>
        <end position="26"/>
    </location>
</feature>
<feature type="compositionally biased region" description="Basic residues" evidence="2">
    <location>
        <begin position="7"/>
        <end position="16"/>
    </location>
</feature>
<name>RL32_BUCA5</name>
<gene>
    <name evidence="1" type="primary">rpmF</name>
    <name type="ordered locus">BUAP5A_343</name>
</gene>